<feature type="chain" id="PRO_0000322822" description="Holliday junction branch migration complex subunit RuvB">
    <location>
        <begin position="1"/>
        <end position="343"/>
    </location>
</feature>
<feature type="region of interest" description="Large ATPase domain (RuvB-L)" evidence="1">
    <location>
        <begin position="1"/>
        <end position="186"/>
    </location>
</feature>
<feature type="region of interest" description="Small ATPAse domain (RuvB-S)" evidence="1">
    <location>
        <begin position="187"/>
        <end position="257"/>
    </location>
</feature>
<feature type="region of interest" description="Head domain (RuvB-H)" evidence="1">
    <location>
        <begin position="260"/>
        <end position="343"/>
    </location>
</feature>
<feature type="binding site" evidence="1">
    <location>
        <position position="25"/>
    </location>
    <ligand>
        <name>ATP</name>
        <dbReference type="ChEBI" id="CHEBI:30616"/>
    </ligand>
</feature>
<feature type="binding site" evidence="1">
    <location>
        <position position="26"/>
    </location>
    <ligand>
        <name>ATP</name>
        <dbReference type="ChEBI" id="CHEBI:30616"/>
    </ligand>
</feature>
<feature type="binding site" evidence="1">
    <location>
        <position position="67"/>
    </location>
    <ligand>
        <name>ATP</name>
        <dbReference type="ChEBI" id="CHEBI:30616"/>
    </ligand>
</feature>
<feature type="binding site" evidence="1">
    <location>
        <position position="70"/>
    </location>
    <ligand>
        <name>ATP</name>
        <dbReference type="ChEBI" id="CHEBI:30616"/>
    </ligand>
</feature>
<feature type="binding site" evidence="1">
    <location>
        <position position="71"/>
    </location>
    <ligand>
        <name>ATP</name>
        <dbReference type="ChEBI" id="CHEBI:30616"/>
    </ligand>
</feature>
<feature type="binding site" evidence="1">
    <location>
        <position position="71"/>
    </location>
    <ligand>
        <name>Mg(2+)</name>
        <dbReference type="ChEBI" id="CHEBI:18420"/>
    </ligand>
</feature>
<feature type="binding site" evidence="1">
    <location>
        <position position="72"/>
    </location>
    <ligand>
        <name>ATP</name>
        <dbReference type="ChEBI" id="CHEBI:30616"/>
    </ligand>
</feature>
<feature type="binding site" evidence="1">
    <location>
        <begin position="133"/>
        <end position="135"/>
    </location>
    <ligand>
        <name>ATP</name>
        <dbReference type="ChEBI" id="CHEBI:30616"/>
    </ligand>
</feature>
<feature type="binding site" evidence="1">
    <location>
        <position position="176"/>
    </location>
    <ligand>
        <name>ATP</name>
        <dbReference type="ChEBI" id="CHEBI:30616"/>
    </ligand>
</feature>
<feature type="binding site" evidence="1">
    <location>
        <position position="186"/>
    </location>
    <ligand>
        <name>ATP</name>
        <dbReference type="ChEBI" id="CHEBI:30616"/>
    </ligand>
</feature>
<feature type="binding site" evidence="1">
    <location>
        <position position="223"/>
    </location>
    <ligand>
        <name>ATP</name>
        <dbReference type="ChEBI" id="CHEBI:30616"/>
    </ligand>
</feature>
<feature type="binding site" evidence="1">
    <location>
        <position position="296"/>
    </location>
    <ligand>
        <name>DNA</name>
        <dbReference type="ChEBI" id="CHEBI:16991"/>
    </ligand>
</feature>
<feature type="binding site" evidence="1">
    <location>
        <position position="315"/>
    </location>
    <ligand>
        <name>DNA</name>
        <dbReference type="ChEBI" id="CHEBI:16991"/>
    </ligand>
</feature>
<feature type="binding site" evidence="1">
    <location>
        <position position="320"/>
    </location>
    <ligand>
        <name>DNA</name>
        <dbReference type="ChEBI" id="CHEBI:16991"/>
    </ligand>
</feature>
<organism>
    <name type="scientific">Myxococcus xanthus (strain DK1622)</name>
    <dbReference type="NCBI Taxonomy" id="246197"/>
    <lineage>
        <taxon>Bacteria</taxon>
        <taxon>Pseudomonadati</taxon>
        <taxon>Myxococcota</taxon>
        <taxon>Myxococcia</taxon>
        <taxon>Myxococcales</taxon>
        <taxon>Cystobacterineae</taxon>
        <taxon>Myxococcaceae</taxon>
        <taxon>Myxococcus</taxon>
    </lineage>
</organism>
<reference key="1">
    <citation type="journal article" date="2006" name="Proc. Natl. Acad. Sci. U.S.A.">
        <title>Evolution of sensory complexity recorded in a myxobacterial genome.</title>
        <authorList>
            <person name="Goldman B.S."/>
            <person name="Nierman W.C."/>
            <person name="Kaiser D."/>
            <person name="Slater S.C."/>
            <person name="Durkin A.S."/>
            <person name="Eisen J.A."/>
            <person name="Ronning C.M."/>
            <person name="Barbazuk W.B."/>
            <person name="Blanchard M."/>
            <person name="Field C."/>
            <person name="Halling C."/>
            <person name="Hinkle G."/>
            <person name="Iartchuk O."/>
            <person name="Kim H.S."/>
            <person name="Mackenzie C."/>
            <person name="Madupu R."/>
            <person name="Miller N."/>
            <person name="Shvartsbeyn A."/>
            <person name="Sullivan S.A."/>
            <person name="Vaudin M."/>
            <person name="Wiegand R."/>
            <person name="Kaplan H.B."/>
        </authorList>
    </citation>
    <scope>NUCLEOTIDE SEQUENCE [LARGE SCALE GENOMIC DNA]</scope>
    <source>
        <strain>DK1622</strain>
    </source>
</reference>
<comment type="function">
    <text evidence="1">The RuvA-RuvB-RuvC complex processes Holliday junction (HJ) DNA during genetic recombination and DNA repair, while the RuvA-RuvB complex plays an important role in the rescue of blocked DNA replication forks via replication fork reversal (RFR). RuvA specifically binds to HJ cruciform DNA, conferring on it an open structure. The RuvB hexamer acts as an ATP-dependent pump, pulling dsDNA into and through the RuvAB complex. RuvB forms 2 homohexamers on either side of HJ DNA bound by 1 or 2 RuvA tetramers; 4 subunits per hexamer contact DNA at a time. Coordinated motions by a converter formed by DNA-disengaged RuvB subunits stimulates ATP hydrolysis and nucleotide exchange. Immobilization of the converter enables RuvB to convert the ATP-contained energy into a lever motion, pulling 2 nucleotides of DNA out of the RuvA tetramer per ATP hydrolyzed, thus driving DNA branch migration. The RuvB motors rotate together with the DNA substrate, which together with the progressing nucleotide cycle form the mechanistic basis for DNA recombination by continuous HJ branch migration. Branch migration allows RuvC to scan DNA until it finds its consensus sequence, where it cleaves and resolves cruciform DNA.</text>
</comment>
<comment type="catalytic activity">
    <reaction evidence="1">
        <text>ATP + H2O = ADP + phosphate + H(+)</text>
        <dbReference type="Rhea" id="RHEA:13065"/>
        <dbReference type="ChEBI" id="CHEBI:15377"/>
        <dbReference type="ChEBI" id="CHEBI:15378"/>
        <dbReference type="ChEBI" id="CHEBI:30616"/>
        <dbReference type="ChEBI" id="CHEBI:43474"/>
        <dbReference type="ChEBI" id="CHEBI:456216"/>
    </reaction>
</comment>
<comment type="subunit">
    <text evidence="1">Homohexamer. Forms an RuvA(8)-RuvB(12)-Holliday junction (HJ) complex. HJ DNA is sandwiched between 2 RuvA tetramers; dsDNA enters through RuvA and exits via RuvB. An RuvB hexamer assembles on each DNA strand where it exits the tetramer. Each RuvB hexamer is contacted by two RuvA subunits (via domain III) on 2 adjacent RuvB subunits; this complex drives branch migration. In the full resolvosome a probable DNA-RuvA(4)-RuvB(12)-RuvC(2) complex forms which resolves the HJ.</text>
</comment>
<comment type="subcellular location">
    <subcellularLocation>
        <location evidence="1">Cytoplasm</location>
    </subcellularLocation>
</comment>
<comment type="domain">
    <text evidence="1">Has 3 domains, the large (RuvB-L) and small ATPase (RuvB-S) domains and the C-terminal head (RuvB-H) domain. The head domain binds DNA, while the ATPase domains jointly bind ATP, ADP or are empty depending on the state of the subunit in the translocation cycle. During a single DNA translocation step the structure of each domain remains the same, but their relative positions change.</text>
</comment>
<comment type="similarity">
    <text evidence="1">Belongs to the RuvB family.</text>
</comment>
<proteinExistence type="inferred from homology"/>
<name>RUVB_MYXXD</name>
<accession>Q1D2J8</accession>
<dbReference type="EC" id="3.6.4.-" evidence="1"/>
<dbReference type="EMBL" id="CP000113">
    <property type="protein sequence ID" value="ABF87481.1"/>
    <property type="molecule type" value="Genomic_DNA"/>
</dbReference>
<dbReference type="RefSeq" id="WP_011554947.1">
    <property type="nucleotide sequence ID" value="NC_008095.1"/>
</dbReference>
<dbReference type="SMR" id="Q1D2J8"/>
<dbReference type="STRING" id="246197.MXAN_4969"/>
<dbReference type="EnsemblBacteria" id="ABF87481">
    <property type="protein sequence ID" value="ABF87481"/>
    <property type="gene ID" value="MXAN_4969"/>
</dbReference>
<dbReference type="GeneID" id="41362254"/>
<dbReference type="KEGG" id="mxa:MXAN_4969"/>
<dbReference type="eggNOG" id="COG2255">
    <property type="taxonomic scope" value="Bacteria"/>
</dbReference>
<dbReference type="HOGENOM" id="CLU_055599_1_0_7"/>
<dbReference type="OrthoDB" id="9804478at2"/>
<dbReference type="Proteomes" id="UP000002402">
    <property type="component" value="Chromosome"/>
</dbReference>
<dbReference type="GO" id="GO:0005737">
    <property type="term" value="C:cytoplasm"/>
    <property type="evidence" value="ECO:0007669"/>
    <property type="project" value="UniProtKB-SubCell"/>
</dbReference>
<dbReference type="GO" id="GO:0048476">
    <property type="term" value="C:Holliday junction resolvase complex"/>
    <property type="evidence" value="ECO:0007669"/>
    <property type="project" value="UniProtKB-UniRule"/>
</dbReference>
<dbReference type="GO" id="GO:0005524">
    <property type="term" value="F:ATP binding"/>
    <property type="evidence" value="ECO:0007669"/>
    <property type="project" value="UniProtKB-UniRule"/>
</dbReference>
<dbReference type="GO" id="GO:0016887">
    <property type="term" value="F:ATP hydrolysis activity"/>
    <property type="evidence" value="ECO:0007669"/>
    <property type="project" value="InterPro"/>
</dbReference>
<dbReference type="GO" id="GO:0000400">
    <property type="term" value="F:four-way junction DNA binding"/>
    <property type="evidence" value="ECO:0007669"/>
    <property type="project" value="UniProtKB-UniRule"/>
</dbReference>
<dbReference type="GO" id="GO:0009378">
    <property type="term" value="F:four-way junction helicase activity"/>
    <property type="evidence" value="ECO:0007669"/>
    <property type="project" value="InterPro"/>
</dbReference>
<dbReference type="GO" id="GO:0006310">
    <property type="term" value="P:DNA recombination"/>
    <property type="evidence" value="ECO:0007669"/>
    <property type="project" value="UniProtKB-UniRule"/>
</dbReference>
<dbReference type="GO" id="GO:0006281">
    <property type="term" value="P:DNA repair"/>
    <property type="evidence" value="ECO:0007669"/>
    <property type="project" value="UniProtKB-UniRule"/>
</dbReference>
<dbReference type="CDD" id="cd00009">
    <property type="entry name" value="AAA"/>
    <property type="match status" value="1"/>
</dbReference>
<dbReference type="Gene3D" id="1.10.8.60">
    <property type="match status" value="1"/>
</dbReference>
<dbReference type="Gene3D" id="3.40.50.300">
    <property type="entry name" value="P-loop containing nucleotide triphosphate hydrolases"/>
    <property type="match status" value="1"/>
</dbReference>
<dbReference type="Gene3D" id="1.10.10.10">
    <property type="entry name" value="Winged helix-like DNA-binding domain superfamily/Winged helix DNA-binding domain"/>
    <property type="match status" value="1"/>
</dbReference>
<dbReference type="HAMAP" id="MF_00016">
    <property type="entry name" value="DNA_HJ_migration_RuvB"/>
    <property type="match status" value="1"/>
</dbReference>
<dbReference type="InterPro" id="IPR003593">
    <property type="entry name" value="AAA+_ATPase"/>
</dbReference>
<dbReference type="InterPro" id="IPR041445">
    <property type="entry name" value="AAA_lid_4"/>
</dbReference>
<dbReference type="InterPro" id="IPR004605">
    <property type="entry name" value="DNA_helicase_Holl-junc_RuvB"/>
</dbReference>
<dbReference type="InterPro" id="IPR027417">
    <property type="entry name" value="P-loop_NTPase"/>
</dbReference>
<dbReference type="InterPro" id="IPR008824">
    <property type="entry name" value="RuvB-like_N"/>
</dbReference>
<dbReference type="InterPro" id="IPR008823">
    <property type="entry name" value="RuvB_C"/>
</dbReference>
<dbReference type="InterPro" id="IPR036388">
    <property type="entry name" value="WH-like_DNA-bd_sf"/>
</dbReference>
<dbReference type="InterPro" id="IPR036390">
    <property type="entry name" value="WH_DNA-bd_sf"/>
</dbReference>
<dbReference type="NCBIfam" id="NF000868">
    <property type="entry name" value="PRK00080.1"/>
    <property type="match status" value="1"/>
</dbReference>
<dbReference type="NCBIfam" id="TIGR00635">
    <property type="entry name" value="ruvB"/>
    <property type="match status" value="1"/>
</dbReference>
<dbReference type="PANTHER" id="PTHR42848">
    <property type="match status" value="1"/>
</dbReference>
<dbReference type="PANTHER" id="PTHR42848:SF1">
    <property type="entry name" value="HOLLIDAY JUNCTION BRANCH MIGRATION COMPLEX SUBUNIT RUVB"/>
    <property type="match status" value="1"/>
</dbReference>
<dbReference type="Pfam" id="PF17864">
    <property type="entry name" value="AAA_lid_4"/>
    <property type="match status" value="1"/>
</dbReference>
<dbReference type="Pfam" id="PF05491">
    <property type="entry name" value="RuvB_C"/>
    <property type="match status" value="1"/>
</dbReference>
<dbReference type="Pfam" id="PF05496">
    <property type="entry name" value="RuvB_N"/>
    <property type="match status" value="1"/>
</dbReference>
<dbReference type="SMART" id="SM00382">
    <property type="entry name" value="AAA"/>
    <property type="match status" value="1"/>
</dbReference>
<dbReference type="SUPFAM" id="SSF52540">
    <property type="entry name" value="P-loop containing nucleoside triphosphate hydrolases"/>
    <property type="match status" value="1"/>
</dbReference>
<dbReference type="SUPFAM" id="SSF46785">
    <property type="entry name" value="Winged helix' DNA-binding domain"/>
    <property type="match status" value="1"/>
</dbReference>
<protein>
    <recommendedName>
        <fullName evidence="1">Holliday junction branch migration complex subunit RuvB</fullName>
        <ecNumber evidence="1">3.6.4.-</ecNumber>
    </recommendedName>
</protein>
<gene>
    <name evidence="1" type="primary">ruvB</name>
    <name type="ordered locus">MXAN_4969</name>
</gene>
<sequence>MVMARKSDTLSEDVLPEDVRLEASLRPRSFDEYVGQGPVVEKLKVYVQAARSRGEALDHCLFSGPPGLGKTSLAHIIANELGVGIHVTSGPALERKGDLAGLLTNLDARDVLFIDEIHRLNAAVEEYLYPAMEDFRLDITIDTGPAARAMKIDLPPFTLIGATTRTGLLTSPLRDRFQIQERLEYYDAKALESILHRSARILGIPLDKDAAREVASRSRGTPRITNRLLRRLRDFAEVEGNGRITLELAQKSLDRLGVDASGLDSMDRKILLTILDKFGGGPVGVETIAASVGEQRDTIEDVYEPFLMQEGFLQRTPRGRMATHRTYQYFKKQPPPTPQGSLF</sequence>
<evidence type="ECO:0000255" key="1">
    <source>
        <dbReference type="HAMAP-Rule" id="MF_00016"/>
    </source>
</evidence>
<keyword id="KW-0067">ATP-binding</keyword>
<keyword id="KW-0963">Cytoplasm</keyword>
<keyword id="KW-0227">DNA damage</keyword>
<keyword id="KW-0233">DNA recombination</keyword>
<keyword id="KW-0234">DNA repair</keyword>
<keyword id="KW-0238">DNA-binding</keyword>
<keyword id="KW-0378">Hydrolase</keyword>
<keyword id="KW-0547">Nucleotide-binding</keyword>
<keyword id="KW-1185">Reference proteome</keyword>